<reference key="1">
    <citation type="journal article" date="2010" name="PLoS ONE">
        <title>The complete genome sequence of Cupriavidus metallidurans strain CH34, a master survivalist in harsh and anthropogenic environments.</title>
        <authorList>
            <person name="Janssen P.J."/>
            <person name="Van Houdt R."/>
            <person name="Moors H."/>
            <person name="Monsieurs P."/>
            <person name="Morin N."/>
            <person name="Michaux A."/>
            <person name="Benotmane M.A."/>
            <person name="Leys N."/>
            <person name="Vallaeys T."/>
            <person name="Lapidus A."/>
            <person name="Monchy S."/>
            <person name="Medigue C."/>
            <person name="Taghavi S."/>
            <person name="McCorkle S."/>
            <person name="Dunn J."/>
            <person name="van der Lelie D."/>
            <person name="Mergeay M."/>
        </authorList>
    </citation>
    <scope>NUCLEOTIDE SEQUENCE [LARGE SCALE GENOMIC DNA]</scope>
    <source>
        <strain>ATCC 43123 / DSM 2839 / NBRC 102507 / CH34</strain>
    </source>
</reference>
<evidence type="ECO:0000255" key="1">
    <source>
        <dbReference type="HAMAP-Rule" id="MF_00664"/>
    </source>
</evidence>
<evidence type="ECO:0000305" key="2"/>
<sequence>MNYPHPLIAREGWPFLAGAFIVSVLVHISAGFWGALPLWIVTLFVLQFFRDPPRPIPSAPNAILAPADGRIVVVEKTQDPYAGREALKISVFMNVFNVHSNRSSLDGKVEKLEYFPGKFVNADLDKASMENERNAVVIRRASDGQVVTLVQVAGLVARRILCYINVGDMLSRGQRYGFIRFGSRVDVYLPTDARPRVTIGEKVSASATVLADLDVRA</sequence>
<dbReference type="EC" id="4.1.1.65" evidence="1"/>
<dbReference type="EMBL" id="CP000352">
    <property type="protein sequence ID" value="ABF07801.1"/>
    <property type="status" value="ALT_INIT"/>
    <property type="molecule type" value="Genomic_DNA"/>
</dbReference>
<dbReference type="RefSeq" id="WP_029308257.1">
    <property type="nucleotide sequence ID" value="NC_007973.1"/>
</dbReference>
<dbReference type="STRING" id="266264.Rmet_0915"/>
<dbReference type="KEGG" id="rme:Rmet_0915"/>
<dbReference type="eggNOG" id="COG0688">
    <property type="taxonomic scope" value="Bacteria"/>
</dbReference>
<dbReference type="HOGENOM" id="CLU_072492_0_0_4"/>
<dbReference type="UniPathway" id="UPA00558">
    <property type="reaction ID" value="UER00616"/>
</dbReference>
<dbReference type="Proteomes" id="UP000002429">
    <property type="component" value="Chromosome"/>
</dbReference>
<dbReference type="GO" id="GO:0005886">
    <property type="term" value="C:plasma membrane"/>
    <property type="evidence" value="ECO:0007669"/>
    <property type="project" value="UniProtKB-SubCell"/>
</dbReference>
<dbReference type="GO" id="GO:0004609">
    <property type="term" value="F:phosphatidylserine decarboxylase activity"/>
    <property type="evidence" value="ECO:0007669"/>
    <property type="project" value="UniProtKB-UniRule"/>
</dbReference>
<dbReference type="GO" id="GO:0006646">
    <property type="term" value="P:phosphatidylethanolamine biosynthetic process"/>
    <property type="evidence" value="ECO:0007669"/>
    <property type="project" value="UniProtKB-UniRule"/>
</dbReference>
<dbReference type="HAMAP" id="MF_00664">
    <property type="entry name" value="PS_decarb_PSD_A"/>
    <property type="match status" value="1"/>
</dbReference>
<dbReference type="InterPro" id="IPR003817">
    <property type="entry name" value="PS_Dcarbxylase"/>
</dbReference>
<dbReference type="InterPro" id="IPR033175">
    <property type="entry name" value="PSD-A"/>
</dbReference>
<dbReference type="NCBIfam" id="TIGR00164">
    <property type="entry name" value="AS_decarb"/>
    <property type="match status" value="1"/>
</dbReference>
<dbReference type="NCBIfam" id="NF003678">
    <property type="entry name" value="PRK05305.1-2"/>
    <property type="match status" value="1"/>
</dbReference>
<dbReference type="NCBIfam" id="NF003680">
    <property type="entry name" value="PRK05305.1-5"/>
    <property type="match status" value="1"/>
</dbReference>
<dbReference type="PANTHER" id="PTHR35809">
    <property type="entry name" value="ARCHAETIDYLSERINE DECARBOXYLASE PROENZYME-RELATED"/>
    <property type="match status" value="1"/>
</dbReference>
<dbReference type="PANTHER" id="PTHR35809:SF1">
    <property type="entry name" value="ARCHAETIDYLSERINE DECARBOXYLASE PROENZYME-RELATED"/>
    <property type="match status" value="1"/>
</dbReference>
<dbReference type="Pfam" id="PF02666">
    <property type="entry name" value="PS_Dcarbxylase"/>
    <property type="match status" value="1"/>
</dbReference>
<proteinExistence type="inferred from homology"/>
<protein>
    <recommendedName>
        <fullName evidence="1">Phosphatidylserine decarboxylase proenzyme</fullName>
        <ecNumber evidence="1">4.1.1.65</ecNumber>
    </recommendedName>
    <component>
        <recommendedName>
            <fullName evidence="1">Phosphatidylserine decarboxylase alpha chain</fullName>
        </recommendedName>
    </component>
    <component>
        <recommendedName>
            <fullName evidence="1">Phosphatidylserine decarboxylase beta chain</fullName>
        </recommendedName>
    </component>
</protein>
<comment type="function">
    <text evidence="1">Catalyzes the formation of phosphatidylethanolamine (PtdEtn) from phosphatidylserine (PtdSer).</text>
</comment>
<comment type="catalytic activity">
    <reaction evidence="1">
        <text>a 1,2-diacyl-sn-glycero-3-phospho-L-serine + H(+) = a 1,2-diacyl-sn-glycero-3-phosphoethanolamine + CO2</text>
        <dbReference type="Rhea" id="RHEA:20828"/>
        <dbReference type="ChEBI" id="CHEBI:15378"/>
        <dbReference type="ChEBI" id="CHEBI:16526"/>
        <dbReference type="ChEBI" id="CHEBI:57262"/>
        <dbReference type="ChEBI" id="CHEBI:64612"/>
        <dbReference type="EC" id="4.1.1.65"/>
    </reaction>
</comment>
<comment type="cofactor">
    <cofactor evidence="1">
        <name>pyruvate</name>
        <dbReference type="ChEBI" id="CHEBI:15361"/>
    </cofactor>
    <text evidence="1">Binds 1 pyruvoyl group covalently per subunit.</text>
</comment>
<comment type="pathway">
    <text evidence="1">Phospholipid metabolism; phosphatidylethanolamine biosynthesis; phosphatidylethanolamine from CDP-diacylglycerol: step 2/2.</text>
</comment>
<comment type="subunit">
    <text evidence="1">Heterodimer of a large membrane-associated beta subunit and a small pyruvoyl-containing alpha subunit.</text>
</comment>
<comment type="subcellular location">
    <subcellularLocation>
        <location evidence="1">Cell membrane</location>
        <topology evidence="1">Peripheral membrane protein</topology>
    </subcellularLocation>
</comment>
<comment type="PTM">
    <text evidence="1">Is synthesized initially as an inactive proenzyme. Formation of the active enzyme involves a self-maturation process in which the active site pyruvoyl group is generated from an internal serine residue via an autocatalytic post-translational modification. Two non-identical subunits are generated from the proenzyme in this reaction, and the pyruvate is formed at the N-terminus of the alpha chain, which is derived from the carboxyl end of the proenzyme. The post-translation cleavage follows an unusual pathway, termed non-hydrolytic serinolysis, in which the side chain hydroxyl group of the serine supplies its oxygen atom to form the C-terminus of the beta chain, while the remainder of the serine residue undergoes an oxidative deamination to produce ammonia and the pyruvoyl prosthetic group on the alpha chain.</text>
</comment>
<comment type="similarity">
    <text evidence="1">Belongs to the phosphatidylserine decarboxylase family. PSD-A subfamily.</text>
</comment>
<comment type="sequence caution" evidence="2">
    <conflict type="erroneous initiation">
        <sequence resource="EMBL-CDS" id="ABF07801"/>
    </conflict>
</comment>
<organism>
    <name type="scientific">Cupriavidus metallidurans (strain ATCC 43123 / DSM 2839 / NBRC 102507 / CH34)</name>
    <name type="common">Ralstonia metallidurans</name>
    <dbReference type="NCBI Taxonomy" id="266264"/>
    <lineage>
        <taxon>Bacteria</taxon>
        <taxon>Pseudomonadati</taxon>
        <taxon>Pseudomonadota</taxon>
        <taxon>Betaproteobacteria</taxon>
        <taxon>Burkholderiales</taxon>
        <taxon>Burkholderiaceae</taxon>
        <taxon>Cupriavidus</taxon>
    </lineage>
</organism>
<keyword id="KW-1003">Cell membrane</keyword>
<keyword id="KW-0210">Decarboxylase</keyword>
<keyword id="KW-0444">Lipid biosynthesis</keyword>
<keyword id="KW-0443">Lipid metabolism</keyword>
<keyword id="KW-0456">Lyase</keyword>
<keyword id="KW-0472">Membrane</keyword>
<keyword id="KW-0594">Phospholipid biosynthesis</keyword>
<keyword id="KW-1208">Phospholipid metabolism</keyword>
<keyword id="KW-0670">Pyruvate</keyword>
<keyword id="KW-1185">Reference proteome</keyword>
<keyword id="KW-0865">Zymogen</keyword>
<accession>Q1LPX5</accession>
<gene>
    <name evidence="1" type="primary">psd</name>
    <name type="ordered locus">Rmet_0915</name>
</gene>
<feature type="chain" id="PRO_0000262247" description="Phosphatidylserine decarboxylase beta chain" evidence="1">
    <location>
        <begin position="1"/>
        <end position="182"/>
    </location>
</feature>
<feature type="chain" id="PRO_0000262248" description="Phosphatidylserine decarboxylase alpha chain" evidence="1">
    <location>
        <begin position="183"/>
        <end position="217"/>
    </location>
</feature>
<feature type="active site" description="Schiff-base intermediate with substrate; via pyruvic acid" evidence="1">
    <location>
        <position position="183"/>
    </location>
</feature>
<feature type="site" description="Cleavage (non-hydrolytic); by autocatalysis" evidence="1">
    <location>
        <begin position="182"/>
        <end position="183"/>
    </location>
</feature>
<feature type="modified residue" description="Pyruvic acid (Ser); by autocatalysis" evidence="1">
    <location>
        <position position="183"/>
    </location>
</feature>
<name>PSD_CUPMC</name>